<proteinExistence type="inferred from homology"/>
<reference key="1">
    <citation type="journal article" date="2003" name="DNA Res.">
        <title>Complete genome structure of Gloeobacter violaceus PCC 7421, a cyanobacterium that lacks thylakoids.</title>
        <authorList>
            <person name="Nakamura Y."/>
            <person name="Kaneko T."/>
            <person name="Sato S."/>
            <person name="Mimuro M."/>
            <person name="Miyashita H."/>
            <person name="Tsuchiya T."/>
            <person name="Sasamoto S."/>
            <person name="Watanabe A."/>
            <person name="Kawashima K."/>
            <person name="Kishida Y."/>
            <person name="Kiyokawa C."/>
            <person name="Kohara M."/>
            <person name="Matsumoto M."/>
            <person name="Matsuno A."/>
            <person name="Nakazaki N."/>
            <person name="Shimpo S."/>
            <person name="Takeuchi C."/>
            <person name="Yamada M."/>
            <person name="Tabata S."/>
        </authorList>
    </citation>
    <scope>NUCLEOTIDE SEQUENCE [LARGE SCALE GENOMIC DNA]</scope>
    <source>
        <strain>ATCC 29082 / PCC 7421</strain>
    </source>
</reference>
<evidence type="ECO:0000255" key="1">
    <source>
        <dbReference type="HAMAP-Rule" id="MF_01344"/>
    </source>
</evidence>
<accession>Q7NJB4</accession>
<protein>
    <recommendedName>
        <fullName evidence="1">Cytochrome b6-f complex subunit 4</fullName>
    </recommendedName>
    <alternativeName>
        <fullName evidence="1">17 kDa polypeptide</fullName>
    </alternativeName>
</protein>
<dbReference type="EMBL" id="BA000045">
    <property type="protein sequence ID" value="BAC89859.1"/>
    <property type="molecule type" value="Genomic_DNA"/>
</dbReference>
<dbReference type="RefSeq" id="NP_924864.1">
    <property type="nucleotide sequence ID" value="NC_005125.1"/>
</dbReference>
<dbReference type="RefSeq" id="WP_011141916.1">
    <property type="nucleotide sequence ID" value="NC_005125.1"/>
</dbReference>
<dbReference type="SMR" id="Q7NJB4"/>
<dbReference type="STRING" id="251221.gene:10759410"/>
<dbReference type="EnsemblBacteria" id="BAC89859">
    <property type="protein sequence ID" value="BAC89859"/>
    <property type="gene ID" value="BAC89859"/>
</dbReference>
<dbReference type="KEGG" id="gvi:gll1918"/>
<dbReference type="PATRIC" id="fig|251221.4.peg.1952"/>
<dbReference type="eggNOG" id="COG1290">
    <property type="taxonomic scope" value="Bacteria"/>
</dbReference>
<dbReference type="HOGENOM" id="CLU_112652_0_0_3"/>
<dbReference type="InParanoid" id="Q7NJB4"/>
<dbReference type="OrthoDB" id="529454at2"/>
<dbReference type="PhylomeDB" id="Q7NJB4"/>
<dbReference type="Proteomes" id="UP000000557">
    <property type="component" value="Chromosome"/>
</dbReference>
<dbReference type="GO" id="GO:0005886">
    <property type="term" value="C:plasma membrane"/>
    <property type="evidence" value="ECO:0007669"/>
    <property type="project" value="UniProtKB-SubCell"/>
</dbReference>
<dbReference type="GO" id="GO:0042651">
    <property type="term" value="C:thylakoid membrane"/>
    <property type="evidence" value="ECO:0007669"/>
    <property type="project" value="InterPro"/>
</dbReference>
<dbReference type="GO" id="GO:0045158">
    <property type="term" value="F:electron transporter, transferring electrons within cytochrome b6/f complex of photosystem II activity"/>
    <property type="evidence" value="ECO:0007669"/>
    <property type="project" value="UniProtKB-UniRule"/>
</dbReference>
<dbReference type="GO" id="GO:0045156">
    <property type="term" value="F:electron transporter, transferring electrons within the cyclic electron transport pathway of photosynthesis activity"/>
    <property type="evidence" value="ECO:0007669"/>
    <property type="project" value="InterPro"/>
</dbReference>
<dbReference type="GO" id="GO:0016491">
    <property type="term" value="F:oxidoreductase activity"/>
    <property type="evidence" value="ECO:0007669"/>
    <property type="project" value="InterPro"/>
</dbReference>
<dbReference type="GO" id="GO:0009767">
    <property type="term" value="P:photosynthetic electron transport chain"/>
    <property type="evidence" value="ECO:0007669"/>
    <property type="project" value="InterPro"/>
</dbReference>
<dbReference type="CDD" id="cd00290">
    <property type="entry name" value="cytochrome_b_C"/>
    <property type="match status" value="1"/>
</dbReference>
<dbReference type="FunFam" id="1.10.287.980:FF:000001">
    <property type="entry name" value="Cytochrome b6-f complex subunit 4"/>
    <property type="match status" value="1"/>
</dbReference>
<dbReference type="Gene3D" id="1.10.287.980">
    <property type="entry name" value="plastocyanin oxidoreductase"/>
    <property type="match status" value="1"/>
</dbReference>
<dbReference type="Gene3D" id="1.20.5.510">
    <property type="entry name" value="Single helix bin"/>
    <property type="match status" value="1"/>
</dbReference>
<dbReference type="HAMAP" id="MF_01344">
    <property type="entry name" value="Cytb6_f_subIV"/>
    <property type="match status" value="1"/>
</dbReference>
<dbReference type="InterPro" id="IPR005798">
    <property type="entry name" value="Cyt_b/b6_C"/>
</dbReference>
<dbReference type="InterPro" id="IPR036150">
    <property type="entry name" value="Cyt_b/b6_C_sf"/>
</dbReference>
<dbReference type="InterPro" id="IPR005870">
    <property type="entry name" value="Cyt_b6/f_cplx_suIV"/>
</dbReference>
<dbReference type="InterPro" id="IPR048260">
    <property type="entry name" value="Cytochrome_b_C_euk/bac"/>
</dbReference>
<dbReference type="NCBIfam" id="TIGR01156">
    <property type="entry name" value="cytb6_f_IV"/>
    <property type="match status" value="1"/>
</dbReference>
<dbReference type="PANTHER" id="PTHR19271">
    <property type="entry name" value="CYTOCHROME B"/>
    <property type="match status" value="1"/>
</dbReference>
<dbReference type="PANTHER" id="PTHR19271:SF40">
    <property type="entry name" value="CYTOCHROME B"/>
    <property type="match status" value="1"/>
</dbReference>
<dbReference type="Pfam" id="PF00032">
    <property type="entry name" value="Cytochrom_B_C"/>
    <property type="match status" value="1"/>
</dbReference>
<dbReference type="PIRSF" id="PIRSF000033">
    <property type="entry name" value="B6f_17K"/>
    <property type="match status" value="1"/>
</dbReference>
<dbReference type="SUPFAM" id="SSF81648">
    <property type="entry name" value="a domain/subunit of cytochrome bc1 complex (Ubiquinol-cytochrome c reductase)"/>
    <property type="match status" value="1"/>
</dbReference>
<dbReference type="PROSITE" id="PS51003">
    <property type="entry name" value="CYTB_CTER"/>
    <property type="match status" value="1"/>
</dbReference>
<organism>
    <name type="scientific">Gloeobacter violaceus (strain ATCC 29082 / PCC 7421)</name>
    <dbReference type="NCBI Taxonomy" id="251221"/>
    <lineage>
        <taxon>Bacteria</taxon>
        <taxon>Bacillati</taxon>
        <taxon>Cyanobacteriota</taxon>
        <taxon>Cyanophyceae</taxon>
        <taxon>Gloeobacterales</taxon>
        <taxon>Gloeobacteraceae</taxon>
        <taxon>Gloeobacter</taxon>
    </lineage>
</organism>
<comment type="function">
    <text evidence="1">Component of the cytochrome b6-f complex, which mediates electron transfer between photosystem II (PSII) and photosystem I (PSI), cyclic electron flow around PSI, and state transitions.</text>
</comment>
<comment type="subunit">
    <text evidence="1">The 4 large subunits of the cytochrome b6-f complex are cytochrome b6, subunit IV (17 kDa polypeptide, PetD), cytochrome f and the Rieske protein, while the 4 small subunits are PetG, PetL, PetM and PetN. The complex functions as a dimer.</text>
</comment>
<comment type="subcellular location">
    <subcellularLocation>
        <location evidence="1">Cell inner membrane</location>
        <topology evidence="1">Multi-pass membrane protein</topology>
    </subcellularLocation>
</comment>
<comment type="similarity">
    <text evidence="1">Belongs to the cytochrome b family. PetD subfamily.</text>
</comment>
<gene>
    <name evidence="1" type="primary">petD</name>
    <name type="ordered locus">gll1918</name>
</gene>
<name>PETD_GLOVI</name>
<feature type="chain" id="PRO_0000061900" description="Cytochrome b6-f complex subunit 4">
    <location>
        <begin position="1"/>
        <end position="159"/>
    </location>
</feature>
<feature type="transmembrane region" description="Helical" evidence="1">
    <location>
        <begin position="35"/>
        <end position="55"/>
    </location>
</feature>
<feature type="transmembrane region" description="Helical" evidence="1">
    <location>
        <begin position="93"/>
        <end position="113"/>
    </location>
</feature>
<feature type="transmembrane region" description="Helical" evidence="1">
    <location>
        <begin position="127"/>
        <end position="147"/>
    </location>
</feature>
<keyword id="KW-0997">Cell inner membrane</keyword>
<keyword id="KW-1003">Cell membrane</keyword>
<keyword id="KW-0249">Electron transport</keyword>
<keyword id="KW-0472">Membrane</keyword>
<keyword id="KW-0602">Photosynthesis</keyword>
<keyword id="KW-1185">Reference proteome</keyword>
<keyword id="KW-0812">Transmembrane</keyword>
<keyword id="KW-1133">Transmembrane helix</keyword>
<keyword id="KW-0813">Transport</keyword>
<sequence>MPLKRPELDDPEIRELLEQGMGHNTYGEPFWPNDILIFGVVILGTIFGVIALAVLDPAKMGEPADPFNTPLHILPEWYFYPVFQILRVVPNKLLGVVLMAAIPIGLALVPFIENVNKFQNPFRRPLATAVFLIGTVVTMYLGIGAMIPDIPKSLTLGLF</sequence>